<gene>
    <name evidence="1" type="primary">rpsO</name>
    <name type="ordered locus">Mkms_2145</name>
</gene>
<sequence length="89" mass="10390">MALTAEQKKEILGQYGLHESDTGSPEAQVALLTKRISDLTEHLKQHKHDHHSRRGLLLLVGRRRRLLKYVAQVDVERYRSLIERLGLRR</sequence>
<evidence type="ECO:0000255" key="1">
    <source>
        <dbReference type="HAMAP-Rule" id="MF_01343"/>
    </source>
</evidence>
<evidence type="ECO:0000305" key="2"/>
<dbReference type="EMBL" id="CP000518">
    <property type="protein sequence ID" value="ABL91343.1"/>
    <property type="molecule type" value="Genomic_DNA"/>
</dbReference>
<dbReference type="SMR" id="A1UET5"/>
<dbReference type="STRING" id="189918.Mkms_2145"/>
<dbReference type="KEGG" id="mkm:Mkms_2145"/>
<dbReference type="HOGENOM" id="CLU_148518_0_0_11"/>
<dbReference type="OrthoDB" id="9799262at2"/>
<dbReference type="GO" id="GO:0022627">
    <property type="term" value="C:cytosolic small ribosomal subunit"/>
    <property type="evidence" value="ECO:0007669"/>
    <property type="project" value="TreeGrafter"/>
</dbReference>
<dbReference type="GO" id="GO:0019843">
    <property type="term" value="F:rRNA binding"/>
    <property type="evidence" value="ECO:0007669"/>
    <property type="project" value="UniProtKB-UniRule"/>
</dbReference>
<dbReference type="GO" id="GO:0003735">
    <property type="term" value="F:structural constituent of ribosome"/>
    <property type="evidence" value="ECO:0007669"/>
    <property type="project" value="InterPro"/>
</dbReference>
<dbReference type="GO" id="GO:0006412">
    <property type="term" value="P:translation"/>
    <property type="evidence" value="ECO:0007669"/>
    <property type="project" value="UniProtKB-UniRule"/>
</dbReference>
<dbReference type="CDD" id="cd00353">
    <property type="entry name" value="Ribosomal_S15p_S13e"/>
    <property type="match status" value="1"/>
</dbReference>
<dbReference type="FunFam" id="1.10.287.10:FF:000002">
    <property type="entry name" value="30S ribosomal protein S15"/>
    <property type="match status" value="1"/>
</dbReference>
<dbReference type="Gene3D" id="6.10.250.3130">
    <property type="match status" value="1"/>
</dbReference>
<dbReference type="Gene3D" id="1.10.287.10">
    <property type="entry name" value="S15/NS1, RNA-binding"/>
    <property type="match status" value="1"/>
</dbReference>
<dbReference type="HAMAP" id="MF_01343_B">
    <property type="entry name" value="Ribosomal_uS15_B"/>
    <property type="match status" value="1"/>
</dbReference>
<dbReference type="InterPro" id="IPR000589">
    <property type="entry name" value="Ribosomal_uS15"/>
</dbReference>
<dbReference type="InterPro" id="IPR005290">
    <property type="entry name" value="Ribosomal_uS15_bac-type"/>
</dbReference>
<dbReference type="InterPro" id="IPR009068">
    <property type="entry name" value="uS15_NS1_RNA-bd_sf"/>
</dbReference>
<dbReference type="NCBIfam" id="TIGR00952">
    <property type="entry name" value="S15_bact"/>
    <property type="match status" value="1"/>
</dbReference>
<dbReference type="PANTHER" id="PTHR23321">
    <property type="entry name" value="RIBOSOMAL PROTEIN S15, BACTERIAL AND ORGANELLAR"/>
    <property type="match status" value="1"/>
</dbReference>
<dbReference type="PANTHER" id="PTHR23321:SF26">
    <property type="entry name" value="SMALL RIBOSOMAL SUBUNIT PROTEIN US15M"/>
    <property type="match status" value="1"/>
</dbReference>
<dbReference type="Pfam" id="PF00312">
    <property type="entry name" value="Ribosomal_S15"/>
    <property type="match status" value="1"/>
</dbReference>
<dbReference type="SMART" id="SM01387">
    <property type="entry name" value="Ribosomal_S15"/>
    <property type="match status" value="1"/>
</dbReference>
<dbReference type="SUPFAM" id="SSF47060">
    <property type="entry name" value="S15/NS1 RNA-binding domain"/>
    <property type="match status" value="1"/>
</dbReference>
<dbReference type="PROSITE" id="PS00362">
    <property type="entry name" value="RIBOSOMAL_S15"/>
    <property type="match status" value="1"/>
</dbReference>
<protein>
    <recommendedName>
        <fullName evidence="1">Small ribosomal subunit protein uS15</fullName>
    </recommendedName>
    <alternativeName>
        <fullName evidence="2">30S ribosomal protein S15</fullName>
    </alternativeName>
</protein>
<keyword id="KW-0687">Ribonucleoprotein</keyword>
<keyword id="KW-0689">Ribosomal protein</keyword>
<keyword id="KW-0694">RNA-binding</keyword>
<keyword id="KW-0699">rRNA-binding</keyword>
<proteinExistence type="inferred from homology"/>
<name>RS15_MYCSK</name>
<organism>
    <name type="scientific">Mycobacterium sp. (strain KMS)</name>
    <dbReference type="NCBI Taxonomy" id="189918"/>
    <lineage>
        <taxon>Bacteria</taxon>
        <taxon>Bacillati</taxon>
        <taxon>Actinomycetota</taxon>
        <taxon>Actinomycetes</taxon>
        <taxon>Mycobacteriales</taxon>
        <taxon>Mycobacteriaceae</taxon>
        <taxon>Mycobacterium</taxon>
    </lineage>
</organism>
<feature type="chain" id="PRO_1000054821" description="Small ribosomal subunit protein uS15">
    <location>
        <begin position="1"/>
        <end position="89"/>
    </location>
</feature>
<accession>A1UET5</accession>
<comment type="function">
    <text evidence="1">One of the primary rRNA binding proteins, it binds directly to 16S rRNA where it helps nucleate assembly of the platform of the 30S subunit by binding and bridging several RNA helices of the 16S rRNA.</text>
</comment>
<comment type="function">
    <text evidence="1">Forms an intersubunit bridge (bridge B4) with the 23S rRNA of the 50S subunit in the ribosome.</text>
</comment>
<comment type="subunit">
    <text evidence="1">Part of the 30S ribosomal subunit. Forms a bridge to the 50S subunit in the 70S ribosome, contacting the 23S rRNA.</text>
</comment>
<comment type="similarity">
    <text evidence="1">Belongs to the universal ribosomal protein uS15 family.</text>
</comment>
<reference key="1">
    <citation type="submission" date="2006-12" db="EMBL/GenBank/DDBJ databases">
        <title>Complete sequence of chromosome of Mycobacterium sp. KMS.</title>
        <authorList>
            <consortium name="US DOE Joint Genome Institute"/>
            <person name="Copeland A."/>
            <person name="Lucas S."/>
            <person name="Lapidus A."/>
            <person name="Barry K."/>
            <person name="Detter J.C."/>
            <person name="Glavina del Rio T."/>
            <person name="Hammon N."/>
            <person name="Israni S."/>
            <person name="Dalin E."/>
            <person name="Tice H."/>
            <person name="Pitluck S."/>
            <person name="Kiss H."/>
            <person name="Brettin T."/>
            <person name="Bruce D."/>
            <person name="Han C."/>
            <person name="Tapia R."/>
            <person name="Gilna P."/>
            <person name="Schmutz J."/>
            <person name="Larimer F."/>
            <person name="Land M."/>
            <person name="Hauser L."/>
            <person name="Kyrpides N."/>
            <person name="Mikhailova N."/>
            <person name="Miller C.D."/>
            <person name="Richardson P."/>
        </authorList>
    </citation>
    <scope>NUCLEOTIDE SEQUENCE [LARGE SCALE GENOMIC DNA]</scope>
    <source>
        <strain>KMS</strain>
    </source>
</reference>